<evidence type="ECO:0000255" key="1">
    <source>
        <dbReference type="HAMAP-Rule" id="MF_00276"/>
    </source>
</evidence>
<comment type="function">
    <text evidence="1">Part of the high-affinity ATP-driven potassium transport (or Kdp) system, which catalyzes the hydrolysis of ATP coupled with the electrogenic transport of potassium into the cytoplasm. This subunit acts as a catalytic chaperone that increases the ATP-binding affinity of the ATP-hydrolyzing subunit KdpB by the formation of a transient KdpB/KdpC/ATP ternary complex.</text>
</comment>
<comment type="subunit">
    <text evidence="1">The system is composed of three essential subunits: KdpA, KdpB and KdpC.</text>
</comment>
<comment type="subcellular location">
    <subcellularLocation>
        <location evidence="1">Cell inner membrane</location>
        <topology evidence="1">Single-pass membrane protein</topology>
    </subcellularLocation>
</comment>
<comment type="similarity">
    <text evidence="1">Belongs to the KdpC family.</text>
</comment>
<name>KDPC_PSEAB</name>
<reference key="1">
    <citation type="journal article" date="2006" name="Genome Biol.">
        <title>Genomic analysis reveals that Pseudomonas aeruginosa virulence is combinatorial.</title>
        <authorList>
            <person name="Lee D.G."/>
            <person name="Urbach J.M."/>
            <person name="Wu G."/>
            <person name="Liberati N.T."/>
            <person name="Feinbaum R.L."/>
            <person name="Miyata S."/>
            <person name="Diggins L.T."/>
            <person name="He J."/>
            <person name="Saucier M."/>
            <person name="Deziel E."/>
            <person name="Friedman L."/>
            <person name="Li L."/>
            <person name="Grills G."/>
            <person name="Montgomery K."/>
            <person name="Kucherlapati R."/>
            <person name="Rahme L.G."/>
            <person name="Ausubel F.M."/>
        </authorList>
    </citation>
    <scope>NUCLEOTIDE SEQUENCE [LARGE SCALE GENOMIC DNA]</scope>
    <source>
        <strain>UCBPP-PA14</strain>
    </source>
</reference>
<dbReference type="EMBL" id="CP000438">
    <property type="protein sequence ID" value="ABJ10815.1"/>
    <property type="molecule type" value="Genomic_DNA"/>
</dbReference>
<dbReference type="RefSeq" id="WP_003136152.1">
    <property type="nucleotide sequence ID" value="NZ_CP034244.1"/>
</dbReference>
<dbReference type="SMR" id="Q02KC0"/>
<dbReference type="KEGG" id="pau:PA14_43370"/>
<dbReference type="PseudoCAP" id="PA14_43370"/>
<dbReference type="HOGENOM" id="CLU_077094_2_0_6"/>
<dbReference type="BioCyc" id="PAER208963:G1G74-3639-MONOMER"/>
<dbReference type="Proteomes" id="UP000000653">
    <property type="component" value="Chromosome"/>
</dbReference>
<dbReference type="GO" id="GO:0005886">
    <property type="term" value="C:plasma membrane"/>
    <property type="evidence" value="ECO:0007669"/>
    <property type="project" value="UniProtKB-SubCell"/>
</dbReference>
<dbReference type="GO" id="GO:0005524">
    <property type="term" value="F:ATP binding"/>
    <property type="evidence" value="ECO:0007669"/>
    <property type="project" value="UniProtKB-UniRule"/>
</dbReference>
<dbReference type="GO" id="GO:0008556">
    <property type="term" value="F:P-type potassium transmembrane transporter activity"/>
    <property type="evidence" value="ECO:0007669"/>
    <property type="project" value="InterPro"/>
</dbReference>
<dbReference type="HAMAP" id="MF_00276">
    <property type="entry name" value="KdpC"/>
    <property type="match status" value="1"/>
</dbReference>
<dbReference type="InterPro" id="IPR003820">
    <property type="entry name" value="KdpC"/>
</dbReference>
<dbReference type="NCBIfam" id="TIGR00681">
    <property type="entry name" value="kdpC"/>
    <property type="match status" value="1"/>
</dbReference>
<dbReference type="NCBIfam" id="NF001454">
    <property type="entry name" value="PRK00315.1"/>
    <property type="match status" value="1"/>
</dbReference>
<dbReference type="PANTHER" id="PTHR30042">
    <property type="entry name" value="POTASSIUM-TRANSPORTING ATPASE C CHAIN"/>
    <property type="match status" value="1"/>
</dbReference>
<dbReference type="PANTHER" id="PTHR30042:SF2">
    <property type="entry name" value="POTASSIUM-TRANSPORTING ATPASE KDPC SUBUNIT"/>
    <property type="match status" value="1"/>
</dbReference>
<dbReference type="Pfam" id="PF02669">
    <property type="entry name" value="KdpC"/>
    <property type="match status" value="1"/>
</dbReference>
<dbReference type="PIRSF" id="PIRSF001296">
    <property type="entry name" value="K_ATPase_KdpC"/>
    <property type="match status" value="1"/>
</dbReference>
<gene>
    <name evidence="1" type="primary">kdpC</name>
    <name type="ordered locus">PA14_43370</name>
</gene>
<proteinExistence type="inferred from homology"/>
<sequence>MFKQLRPALASLLVLSLVTGVAYPLLVTGIAQLAFPEQANGSLLRDAEGKVLGSRLIAQKFDGEEWFHSRPSAGDYATVSSAASNLAPSNPALAERIARDAAQERIADQGPVPLALVTTSGSGLDPQLPPQAARYQALRVATARGLPLRLVEDLVESHTERPLVGPAVVNVLALNMALTGLKR</sequence>
<feature type="chain" id="PRO_1000022303" description="Potassium-transporting ATPase KdpC subunit">
    <location>
        <begin position="1"/>
        <end position="183"/>
    </location>
</feature>
<feature type="transmembrane region" description="Helical" evidence="1">
    <location>
        <begin position="10"/>
        <end position="30"/>
    </location>
</feature>
<organism>
    <name type="scientific">Pseudomonas aeruginosa (strain UCBPP-PA14)</name>
    <dbReference type="NCBI Taxonomy" id="208963"/>
    <lineage>
        <taxon>Bacteria</taxon>
        <taxon>Pseudomonadati</taxon>
        <taxon>Pseudomonadota</taxon>
        <taxon>Gammaproteobacteria</taxon>
        <taxon>Pseudomonadales</taxon>
        <taxon>Pseudomonadaceae</taxon>
        <taxon>Pseudomonas</taxon>
    </lineage>
</organism>
<keyword id="KW-0067">ATP-binding</keyword>
<keyword id="KW-0997">Cell inner membrane</keyword>
<keyword id="KW-1003">Cell membrane</keyword>
<keyword id="KW-0406">Ion transport</keyword>
<keyword id="KW-0472">Membrane</keyword>
<keyword id="KW-0547">Nucleotide-binding</keyword>
<keyword id="KW-0630">Potassium</keyword>
<keyword id="KW-0633">Potassium transport</keyword>
<keyword id="KW-0812">Transmembrane</keyword>
<keyword id="KW-1133">Transmembrane helix</keyword>
<keyword id="KW-0813">Transport</keyword>
<accession>Q02KC0</accession>
<protein>
    <recommendedName>
        <fullName evidence="1">Potassium-transporting ATPase KdpC subunit</fullName>
    </recommendedName>
    <alternativeName>
        <fullName evidence="1">ATP phosphohydrolase [potassium-transporting] C chain</fullName>
    </alternativeName>
    <alternativeName>
        <fullName evidence="1">Potassium-binding and translocating subunit C</fullName>
    </alternativeName>
    <alternativeName>
        <fullName evidence="1">Potassium-translocating ATPase C chain</fullName>
    </alternativeName>
</protein>